<accession>P0AAK5</accession>
<accession>P30132</accession>
<protein>
    <recommendedName>
        <fullName>Electron transport protein HydN</fullName>
    </recommendedName>
</protein>
<sequence>MNRFIIADASKCIGCRTCEVACVVSHQENQDCASLTPETFLPRIHVIKGVNISTATVCRQCEDAPCANVCPNGAISRDKGFVHVMQERCIGCKTCVVACPYGAMEVVVRPVIRNSGAGLNVRADKAEANKCDLCNHREDGPACMAACPTHALICVDRNKLEQLSAEKRRRTALMF</sequence>
<keyword id="KW-0004">4Fe-4S</keyword>
<keyword id="KW-0249">Electron transport</keyword>
<keyword id="KW-0408">Iron</keyword>
<keyword id="KW-0411">Iron-sulfur</keyword>
<keyword id="KW-0479">Metal-binding</keyword>
<keyword id="KW-1185">Reference proteome</keyword>
<keyword id="KW-0677">Repeat</keyword>
<keyword id="KW-0813">Transport</keyword>
<gene>
    <name type="primary">hydN</name>
    <name type="ordered locus">c3269</name>
</gene>
<reference key="1">
    <citation type="journal article" date="2002" name="Proc. Natl. Acad. Sci. U.S.A.">
        <title>Extensive mosaic structure revealed by the complete genome sequence of uropathogenic Escherichia coli.</title>
        <authorList>
            <person name="Welch R.A."/>
            <person name="Burland V."/>
            <person name="Plunkett G. III"/>
            <person name="Redford P."/>
            <person name="Roesch P."/>
            <person name="Rasko D."/>
            <person name="Buckles E.L."/>
            <person name="Liou S.-R."/>
            <person name="Boutin A."/>
            <person name="Hackett J."/>
            <person name="Stroud D."/>
            <person name="Mayhew G.F."/>
            <person name="Rose D.J."/>
            <person name="Zhou S."/>
            <person name="Schwartz D.C."/>
            <person name="Perna N.T."/>
            <person name="Mobley H.L.T."/>
            <person name="Donnenberg M.S."/>
            <person name="Blattner F.R."/>
        </authorList>
    </citation>
    <scope>NUCLEOTIDE SEQUENCE [LARGE SCALE GENOMIC DNA]</scope>
    <source>
        <strain>CFT073 / ATCC 700928 / UPEC</strain>
    </source>
</reference>
<proteinExistence type="inferred from homology"/>
<organism>
    <name type="scientific">Escherichia coli O6:H1 (strain CFT073 / ATCC 700928 / UPEC)</name>
    <dbReference type="NCBI Taxonomy" id="199310"/>
    <lineage>
        <taxon>Bacteria</taxon>
        <taxon>Pseudomonadati</taxon>
        <taxon>Pseudomonadota</taxon>
        <taxon>Gammaproteobacteria</taxon>
        <taxon>Enterobacterales</taxon>
        <taxon>Enterobacteriaceae</taxon>
        <taxon>Escherichia</taxon>
    </lineage>
</organism>
<feature type="chain" id="PRO_0000159271" description="Electron transport protein HydN">
    <location>
        <begin position="1"/>
        <end position="175"/>
    </location>
</feature>
<feature type="domain" description="4Fe-4S ferredoxin-type 1" evidence="2">
    <location>
        <begin position="2"/>
        <end position="32"/>
    </location>
</feature>
<feature type="domain" description="4Fe-4S ferredoxin-type 2" evidence="2">
    <location>
        <begin position="48"/>
        <end position="79"/>
    </location>
</feature>
<feature type="domain" description="4Fe-4S ferredoxin-type 3" evidence="2">
    <location>
        <begin position="80"/>
        <end position="109"/>
    </location>
</feature>
<feature type="domain" description="4Fe-4S ferredoxin-type 4" evidence="2">
    <location>
        <begin position="124"/>
        <end position="157"/>
    </location>
</feature>
<feature type="binding site" evidence="1">
    <location>
        <position position="12"/>
    </location>
    <ligand>
        <name>[4Fe-4S] cluster</name>
        <dbReference type="ChEBI" id="CHEBI:49883"/>
        <label>1</label>
    </ligand>
</feature>
<feature type="binding site" evidence="1">
    <location>
        <position position="15"/>
    </location>
    <ligand>
        <name>[4Fe-4S] cluster</name>
        <dbReference type="ChEBI" id="CHEBI:49883"/>
        <label>1</label>
    </ligand>
</feature>
<feature type="binding site" evidence="1">
    <location>
        <position position="18"/>
    </location>
    <ligand>
        <name>[4Fe-4S] cluster</name>
        <dbReference type="ChEBI" id="CHEBI:49883"/>
        <label>1</label>
    </ligand>
</feature>
<feature type="binding site" evidence="1">
    <location>
        <position position="22"/>
    </location>
    <ligand>
        <name>[4Fe-4S] cluster</name>
        <dbReference type="ChEBI" id="CHEBI:49883"/>
        <label>2</label>
    </ligand>
</feature>
<feature type="binding site" evidence="1">
    <location>
        <position position="58"/>
    </location>
    <ligand>
        <name>[4Fe-4S] cluster</name>
        <dbReference type="ChEBI" id="CHEBI:49883"/>
        <label>3</label>
    </ligand>
</feature>
<feature type="binding site" evidence="1">
    <location>
        <position position="61"/>
    </location>
    <ligand>
        <name>[4Fe-4S] cluster</name>
        <dbReference type="ChEBI" id="CHEBI:49883"/>
        <label>3</label>
    </ligand>
</feature>
<feature type="binding site" evidence="1">
    <location>
        <position position="66"/>
    </location>
    <ligand>
        <name>[4Fe-4S] cluster</name>
        <dbReference type="ChEBI" id="CHEBI:49883"/>
        <label>3</label>
    </ligand>
</feature>
<feature type="binding site" evidence="1">
    <location>
        <position position="70"/>
    </location>
    <ligand>
        <name>[4Fe-4S] cluster</name>
        <dbReference type="ChEBI" id="CHEBI:49883"/>
        <label>4</label>
    </ligand>
</feature>
<feature type="binding site" evidence="1">
    <location>
        <position position="89"/>
    </location>
    <ligand>
        <name>[4Fe-4S] cluster</name>
        <dbReference type="ChEBI" id="CHEBI:49883"/>
        <label>4</label>
    </ligand>
</feature>
<feature type="binding site" evidence="1">
    <location>
        <position position="92"/>
    </location>
    <ligand>
        <name>[4Fe-4S] cluster</name>
        <dbReference type="ChEBI" id="CHEBI:49883"/>
        <label>4</label>
    </ligand>
</feature>
<feature type="binding site" evidence="1">
    <location>
        <position position="95"/>
    </location>
    <ligand>
        <name>[4Fe-4S] cluster</name>
        <dbReference type="ChEBI" id="CHEBI:49883"/>
        <label>4</label>
    </ligand>
</feature>
<feature type="binding site" evidence="1">
    <location>
        <position position="99"/>
    </location>
    <ligand>
        <name>[4Fe-4S] cluster</name>
        <dbReference type="ChEBI" id="CHEBI:49883"/>
        <label>3</label>
    </ligand>
</feature>
<feature type="binding site" evidence="1">
    <location>
        <position position="131"/>
    </location>
    <ligand>
        <name>[4Fe-4S] cluster</name>
        <dbReference type="ChEBI" id="CHEBI:49883"/>
        <label>2</label>
    </ligand>
</feature>
<feature type="binding site" evidence="1">
    <location>
        <position position="134"/>
    </location>
    <ligand>
        <name>[4Fe-4S] cluster</name>
        <dbReference type="ChEBI" id="CHEBI:49883"/>
        <label>2</label>
    </ligand>
</feature>
<feature type="binding site" evidence="1">
    <location>
        <position position="143"/>
    </location>
    <ligand>
        <name>[4Fe-4S] cluster</name>
        <dbReference type="ChEBI" id="CHEBI:49883"/>
        <label>2</label>
    </ligand>
</feature>
<feature type="binding site" evidence="1">
    <location>
        <position position="147"/>
    </location>
    <ligand>
        <name>[4Fe-4S] cluster</name>
        <dbReference type="ChEBI" id="CHEBI:49883"/>
        <label>1</label>
    </ligand>
</feature>
<comment type="function">
    <text evidence="1">Electron transport from formate to hydrogen.</text>
</comment>
<comment type="cofactor">
    <cofactor evidence="1">
        <name>[4Fe-4S] cluster</name>
        <dbReference type="ChEBI" id="CHEBI:49883"/>
    </cofactor>
    <text evidence="1">Binds 4 [4Fe-4S] clusters.</text>
</comment>
<comment type="sequence caution" evidence="3">
    <conflict type="erroneous initiation">
        <sequence resource="EMBL-CDS" id="AAN81718"/>
    </conflict>
</comment>
<evidence type="ECO:0000250" key="1"/>
<evidence type="ECO:0000255" key="2">
    <source>
        <dbReference type="PROSITE-ProRule" id="PRU00711"/>
    </source>
</evidence>
<evidence type="ECO:0000305" key="3"/>
<name>HYDN_ECOL6</name>
<dbReference type="EMBL" id="AE014075">
    <property type="protein sequence ID" value="AAN81718.1"/>
    <property type="status" value="ALT_INIT"/>
    <property type="molecule type" value="Genomic_DNA"/>
</dbReference>
<dbReference type="RefSeq" id="WP_001078777.1">
    <property type="nucleotide sequence ID" value="NZ_CP051263.1"/>
</dbReference>
<dbReference type="SMR" id="P0AAK5"/>
<dbReference type="STRING" id="199310.c3269"/>
<dbReference type="GeneID" id="93779298"/>
<dbReference type="KEGG" id="ecc:c3269"/>
<dbReference type="eggNOG" id="COG1142">
    <property type="taxonomic scope" value="Bacteria"/>
</dbReference>
<dbReference type="HOGENOM" id="CLU_043374_3_0_6"/>
<dbReference type="Proteomes" id="UP000001410">
    <property type="component" value="Chromosome"/>
</dbReference>
<dbReference type="GO" id="GO:0051539">
    <property type="term" value="F:4 iron, 4 sulfur cluster binding"/>
    <property type="evidence" value="ECO:0007669"/>
    <property type="project" value="UniProtKB-KW"/>
</dbReference>
<dbReference type="GO" id="GO:0046872">
    <property type="term" value="F:metal ion binding"/>
    <property type="evidence" value="ECO:0007669"/>
    <property type="project" value="UniProtKB-KW"/>
</dbReference>
<dbReference type="CDD" id="cd10554">
    <property type="entry name" value="HycB_like"/>
    <property type="match status" value="1"/>
</dbReference>
<dbReference type="FunFam" id="3.30.70.20:FF:000027">
    <property type="entry name" value="Electron transport protein hydN"/>
    <property type="match status" value="1"/>
</dbReference>
<dbReference type="Gene3D" id="3.30.70.20">
    <property type="match status" value="2"/>
</dbReference>
<dbReference type="InterPro" id="IPR017896">
    <property type="entry name" value="4Fe4S_Fe-S-bd"/>
</dbReference>
<dbReference type="InterPro" id="IPR017900">
    <property type="entry name" value="4Fe4S_Fe_S_CS"/>
</dbReference>
<dbReference type="InterPro" id="IPR050294">
    <property type="entry name" value="RnfB_subfamily"/>
</dbReference>
<dbReference type="NCBIfam" id="NF007658">
    <property type="entry name" value="PRK10330.1"/>
    <property type="match status" value="1"/>
</dbReference>
<dbReference type="PANTHER" id="PTHR42859:SF17">
    <property type="entry name" value="ELECTRON TRANSPORT PROTEIN HYDN-RELATED"/>
    <property type="match status" value="1"/>
</dbReference>
<dbReference type="PANTHER" id="PTHR42859">
    <property type="entry name" value="OXIDOREDUCTASE"/>
    <property type="match status" value="1"/>
</dbReference>
<dbReference type="Pfam" id="PF13247">
    <property type="entry name" value="Fer4_11"/>
    <property type="match status" value="1"/>
</dbReference>
<dbReference type="Pfam" id="PF12800">
    <property type="entry name" value="Fer4_4"/>
    <property type="match status" value="1"/>
</dbReference>
<dbReference type="SUPFAM" id="SSF54862">
    <property type="entry name" value="4Fe-4S ferredoxins"/>
    <property type="match status" value="1"/>
</dbReference>
<dbReference type="PROSITE" id="PS00198">
    <property type="entry name" value="4FE4S_FER_1"/>
    <property type="match status" value="1"/>
</dbReference>
<dbReference type="PROSITE" id="PS51379">
    <property type="entry name" value="4FE4S_FER_2"/>
    <property type="match status" value="4"/>
</dbReference>